<keyword id="KW-0450">Lipoyl</keyword>
<keyword id="KW-1185">Reference proteome</keyword>
<organism>
    <name type="scientific">Citrobacter koseri (strain ATCC BAA-895 / CDC 4225-83 / SGSC4696)</name>
    <dbReference type="NCBI Taxonomy" id="290338"/>
    <lineage>
        <taxon>Bacteria</taxon>
        <taxon>Pseudomonadati</taxon>
        <taxon>Pseudomonadota</taxon>
        <taxon>Gammaproteobacteria</taxon>
        <taxon>Enterobacterales</taxon>
        <taxon>Enterobacteriaceae</taxon>
        <taxon>Citrobacter</taxon>
    </lineage>
</organism>
<protein>
    <recommendedName>
        <fullName evidence="1">Glycine cleavage system H protein</fullName>
    </recommendedName>
</protein>
<dbReference type="EMBL" id="CP000822">
    <property type="protein sequence ID" value="ABV15326.1"/>
    <property type="molecule type" value="Genomic_DNA"/>
</dbReference>
<dbReference type="RefSeq" id="WP_012135010.1">
    <property type="nucleotide sequence ID" value="NC_009792.1"/>
</dbReference>
<dbReference type="SMR" id="A8APB3"/>
<dbReference type="STRING" id="290338.CKO_04268"/>
<dbReference type="GeneID" id="45137869"/>
<dbReference type="KEGG" id="cko:CKO_04268"/>
<dbReference type="HOGENOM" id="CLU_097408_2_1_6"/>
<dbReference type="OrthoDB" id="9796712at2"/>
<dbReference type="Proteomes" id="UP000008148">
    <property type="component" value="Chromosome"/>
</dbReference>
<dbReference type="GO" id="GO:0005829">
    <property type="term" value="C:cytosol"/>
    <property type="evidence" value="ECO:0007669"/>
    <property type="project" value="TreeGrafter"/>
</dbReference>
<dbReference type="GO" id="GO:0005960">
    <property type="term" value="C:glycine cleavage complex"/>
    <property type="evidence" value="ECO:0007669"/>
    <property type="project" value="InterPro"/>
</dbReference>
<dbReference type="GO" id="GO:0019464">
    <property type="term" value="P:glycine decarboxylation via glycine cleavage system"/>
    <property type="evidence" value="ECO:0007669"/>
    <property type="project" value="UniProtKB-UniRule"/>
</dbReference>
<dbReference type="CDD" id="cd06848">
    <property type="entry name" value="GCS_H"/>
    <property type="match status" value="1"/>
</dbReference>
<dbReference type="FunFam" id="2.40.50.100:FF:000011">
    <property type="entry name" value="Glycine cleavage system H protein"/>
    <property type="match status" value="1"/>
</dbReference>
<dbReference type="Gene3D" id="2.40.50.100">
    <property type="match status" value="1"/>
</dbReference>
<dbReference type="HAMAP" id="MF_00272">
    <property type="entry name" value="GcvH"/>
    <property type="match status" value="1"/>
</dbReference>
<dbReference type="InterPro" id="IPR003016">
    <property type="entry name" value="2-oxoA_DH_lipoyl-BS"/>
</dbReference>
<dbReference type="InterPro" id="IPR000089">
    <property type="entry name" value="Biotin_lipoyl"/>
</dbReference>
<dbReference type="InterPro" id="IPR002930">
    <property type="entry name" value="GCV_H"/>
</dbReference>
<dbReference type="InterPro" id="IPR033753">
    <property type="entry name" value="GCV_H/Fam206"/>
</dbReference>
<dbReference type="InterPro" id="IPR017453">
    <property type="entry name" value="GCV_H_sub"/>
</dbReference>
<dbReference type="InterPro" id="IPR011053">
    <property type="entry name" value="Single_hybrid_motif"/>
</dbReference>
<dbReference type="NCBIfam" id="TIGR00527">
    <property type="entry name" value="gcvH"/>
    <property type="match status" value="1"/>
</dbReference>
<dbReference type="NCBIfam" id="NF002270">
    <property type="entry name" value="PRK01202.1"/>
    <property type="match status" value="1"/>
</dbReference>
<dbReference type="PANTHER" id="PTHR11715">
    <property type="entry name" value="GLYCINE CLEAVAGE SYSTEM H PROTEIN"/>
    <property type="match status" value="1"/>
</dbReference>
<dbReference type="PANTHER" id="PTHR11715:SF3">
    <property type="entry name" value="GLYCINE CLEAVAGE SYSTEM H PROTEIN-RELATED"/>
    <property type="match status" value="1"/>
</dbReference>
<dbReference type="Pfam" id="PF01597">
    <property type="entry name" value="GCV_H"/>
    <property type="match status" value="1"/>
</dbReference>
<dbReference type="SUPFAM" id="SSF51230">
    <property type="entry name" value="Single hybrid motif"/>
    <property type="match status" value="1"/>
</dbReference>
<dbReference type="PROSITE" id="PS50968">
    <property type="entry name" value="BIOTINYL_LIPOYL"/>
    <property type="match status" value="1"/>
</dbReference>
<dbReference type="PROSITE" id="PS00189">
    <property type="entry name" value="LIPOYL"/>
    <property type="match status" value="1"/>
</dbReference>
<gene>
    <name evidence="1" type="primary">gcvH</name>
    <name type="ordered locus">CKO_04268</name>
</gene>
<comment type="function">
    <text evidence="1">The glycine cleavage system catalyzes the degradation of glycine. The H protein shuttles the methylamine group of glycine from the P protein to the T protein.</text>
</comment>
<comment type="cofactor">
    <cofactor evidence="1">
        <name>(R)-lipoate</name>
        <dbReference type="ChEBI" id="CHEBI:83088"/>
    </cofactor>
    <text evidence="1">Binds 1 lipoyl cofactor covalently.</text>
</comment>
<comment type="subunit">
    <text evidence="1">The glycine cleavage system is composed of four proteins: P, T, L and H.</text>
</comment>
<comment type="similarity">
    <text evidence="1">Belongs to the GcvH family.</text>
</comment>
<proteinExistence type="inferred from homology"/>
<accession>A8APB3</accession>
<reference key="1">
    <citation type="submission" date="2007-08" db="EMBL/GenBank/DDBJ databases">
        <authorList>
            <consortium name="The Citrobacter koseri Genome Sequencing Project"/>
            <person name="McClelland M."/>
            <person name="Sanderson E.K."/>
            <person name="Porwollik S."/>
            <person name="Spieth J."/>
            <person name="Clifton W.S."/>
            <person name="Latreille P."/>
            <person name="Courtney L."/>
            <person name="Wang C."/>
            <person name="Pepin K."/>
            <person name="Bhonagiri V."/>
            <person name="Nash W."/>
            <person name="Johnson M."/>
            <person name="Thiruvilangam P."/>
            <person name="Wilson R."/>
        </authorList>
    </citation>
    <scope>NUCLEOTIDE SEQUENCE [LARGE SCALE GENOMIC DNA]</scope>
    <source>
        <strain>ATCC BAA-895 / CDC 4225-83 / SGSC4696</strain>
    </source>
</reference>
<sequence length="129" mass="13795">MSNVPVELKYSKEHEWLRKEADGTYTVGITEHAQELLGDMVFVDLPDVGATVAAGDDCAVAESVKAASDIYAPVSGEIVAVNDALSDSPELVNSEPYAGGWIFKIKASDESEIDSLLDATAYEALLEDE</sequence>
<name>GCSH_CITK8</name>
<evidence type="ECO:0000255" key="1">
    <source>
        <dbReference type="HAMAP-Rule" id="MF_00272"/>
    </source>
</evidence>
<evidence type="ECO:0000255" key="2">
    <source>
        <dbReference type="PROSITE-ProRule" id="PRU01066"/>
    </source>
</evidence>
<feature type="chain" id="PRO_1000022190" description="Glycine cleavage system H protein">
    <location>
        <begin position="1"/>
        <end position="129"/>
    </location>
</feature>
<feature type="domain" description="Lipoyl-binding" evidence="2">
    <location>
        <begin position="24"/>
        <end position="106"/>
    </location>
</feature>
<feature type="modified residue" description="N6-lipoyllysine" evidence="1">
    <location>
        <position position="65"/>
    </location>
</feature>